<organism>
    <name type="scientific">Vibrio campbellii (strain ATCC BAA-1116)</name>
    <dbReference type="NCBI Taxonomy" id="2902295"/>
    <lineage>
        <taxon>Bacteria</taxon>
        <taxon>Pseudomonadati</taxon>
        <taxon>Pseudomonadota</taxon>
        <taxon>Gammaproteobacteria</taxon>
        <taxon>Vibrionales</taxon>
        <taxon>Vibrionaceae</taxon>
        <taxon>Vibrio</taxon>
    </lineage>
</organism>
<name>COBQ_VIBC1</name>
<evidence type="ECO:0000255" key="1">
    <source>
        <dbReference type="HAMAP-Rule" id="MF_00028"/>
    </source>
</evidence>
<comment type="function">
    <text evidence="1">Catalyzes amidations at positions B, D, E, and G on adenosylcobyrinic A,C-diamide. NH(2) groups are provided by glutamine, and one molecule of ATP is hydrogenolyzed for each amidation.</text>
</comment>
<comment type="pathway">
    <text evidence="1">Cofactor biosynthesis; adenosylcobalamin biosynthesis.</text>
</comment>
<comment type="similarity">
    <text evidence="1">Belongs to the CobB/CobQ family. CobQ subfamily.</text>
</comment>
<proteinExistence type="inferred from homology"/>
<feature type="chain" id="PRO_0000332400" description="Cobyric acid synthase">
    <location>
        <begin position="1"/>
        <end position="475"/>
    </location>
</feature>
<feature type="domain" description="GATase cobBQ-type" evidence="1">
    <location>
        <begin position="244"/>
        <end position="431"/>
    </location>
</feature>
<feature type="active site" description="Nucleophile" evidence="1">
    <location>
        <position position="325"/>
    </location>
</feature>
<feature type="active site" evidence="1">
    <location>
        <position position="423"/>
    </location>
</feature>
<reference key="1">
    <citation type="submission" date="2007-08" db="EMBL/GenBank/DDBJ databases">
        <authorList>
            <consortium name="The Vibrio harveyi Genome Sequencing Project"/>
            <person name="Bassler B."/>
            <person name="Clifton S.W."/>
            <person name="Fulton L."/>
            <person name="Delehaunty K."/>
            <person name="Fronick C."/>
            <person name="Harrison M."/>
            <person name="Markivic C."/>
            <person name="Fulton R."/>
            <person name="Tin-Wollam A.-M."/>
            <person name="Shah N."/>
            <person name="Pepin K."/>
            <person name="Nash W."/>
            <person name="Thiruvilangam P."/>
            <person name="Bhonagiri V."/>
            <person name="Waters C."/>
            <person name="Tu K.C."/>
            <person name="Irgon J."/>
            <person name="Wilson R.K."/>
        </authorList>
    </citation>
    <scope>NUCLEOTIDE SEQUENCE [LARGE SCALE GENOMIC DNA]</scope>
    <source>
        <strain>ATCC BAA-1116 / BB120</strain>
    </source>
</reference>
<gene>
    <name evidence="1" type="primary">cobQ</name>
    <name type="ordered locus">VIBHAR_05724</name>
</gene>
<protein>
    <recommendedName>
        <fullName evidence="1">Cobyric acid synthase</fullName>
    </recommendedName>
</protein>
<dbReference type="EMBL" id="CP000790">
    <property type="protein sequence ID" value="ABU73618.1"/>
    <property type="molecule type" value="Genomic_DNA"/>
</dbReference>
<dbReference type="SMR" id="A7N8K5"/>
<dbReference type="KEGG" id="vha:VIBHAR_05724"/>
<dbReference type="PATRIC" id="fig|338187.25.peg.4550"/>
<dbReference type="UniPathway" id="UPA00148"/>
<dbReference type="Proteomes" id="UP000008152">
    <property type="component" value="Chromosome II"/>
</dbReference>
<dbReference type="GO" id="GO:0015420">
    <property type="term" value="F:ABC-type vitamin B12 transporter activity"/>
    <property type="evidence" value="ECO:0007669"/>
    <property type="project" value="UniProtKB-UniRule"/>
</dbReference>
<dbReference type="GO" id="GO:0003824">
    <property type="term" value="F:catalytic activity"/>
    <property type="evidence" value="ECO:0007669"/>
    <property type="project" value="InterPro"/>
</dbReference>
<dbReference type="GO" id="GO:0009236">
    <property type="term" value="P:cobalamin biosynthetic process"/>
    <property type="evidence" value="ECO:0007669"/>
    <property type="project" value="UniProtKB-UniRule"/>
</dbReference>
<dbReference type="CDD" id="cd05389">
    <property type="entry name" value="CobQ_N"/>
    <property type="match status" value="1"/>
</dbReference>
<dbReference type="CDD" id="cd01750">
    <property type="entry name" value="GATase1_CobQ"/>
    <property type="match status" value="1"/>
</dbReference>
<dbReference type="Gene3D" id="3.40.50.880">
    <property type="match status" value="1"/>
</dbReference>
<dbReference type="Gene3D" id="3.40.50.300">
    <property type="entry name" value="P-loop containing nucleotide triphosphate hydrolases"/>
    <property type="match status" value="1"/>
</dbReference>
<dbReference type="HAMAP" id="MF_00028">
    <property type="entry name" value="CobQ"/>
    <property type="match status" value="1"/>
</dbReference>
<dbReference type="InterPro" id="IPR029062">
    <property type="entry name" value="Class_I_gatase-like"/>
</dbReference>
<dbReference type="InterPro" id="IPR002586">
    <property type="entry name" value="CobQ/CobB/MinD/ParA_Nub-bd_dom"/>
</dbReference>
<dbReference type="InterPro" id="IPR033949">
    <property type="entry name" value="CobQ_GATase1"/>
</dbReference>
<dbReference type="InterPro" id="IPR047045">
    <property type="entry name" value="CobQ_N"/>
</dbReference>
<dbReference type="InterPro" id="IPR004459">
    <property type="entry name" value="CobQ_synth"/>
</dbReference>
<dbReference type="InterPro" id="IPR011698">
    <property type="entry name" value="GATase_3"/>
</dbReference>
<dbReference type="InterPro" id="IPR027417">
    <property type="entry name" value="P-loop_NTPase"/>
</dbReference>
<dbReference type="NCBIfam" id="TIGR00313">
    <property type="entry name" value="cobQ"/>
    <property type="match status" value="1"/>
</dbReference>
<dbReference type="NCBIfam" id="NF001989">
    <property type="entry name" value="PRK00784.1"/>
    <property type="match status" value="1"/>
</dbReference>
<dbReference type="PANTHER" id="PTHR21343:SF1">
    <property type="entry name" value="COBYRIC ACID SYNTHASE"/>
    <property type="match status" value="1"/>
</dbReference>
<dbReference type="PANTHER" id="PTHR21343">
    <property type="entry name" value="DETHIOBIOTIN SYNTHETASE"/>
    <property type="match status" value="1"/>
</dbReference>
<dbReference type="Pfam" id="PF01656">
    <property type="entry name" value="CbiA"/>
    <property type="match status" value="1"/>
</dbReference>
<dbReference type="Pfam" id="PF07685">
    <property type="entry name" value="GATase_3"/>
    <property type="match status" value="1"/>
</dbReference>
<dbReference type="SUPFAM" id="SSF52317">
    <property type="entry name" value="Class I glutamine amidotransferase-like"/>
    <property type="match status" value="1"/>
</dbReference>
<dbReference type="SUPFAM" id="SSF52540">
    <property type="entry name" value="P-loop containing nucleoside triphosphate hydrolases"/>
    <property type="match status" value="1"/>
</dbReference>
<dbReference type="PROSITE" id="PS51274">
    <property type="entry name" value="GATASE_COBBQ"/>
    <property type="match status" value="1"/>
</dbReference>
<keyword id="KW-0169">Cobalamin biosynthesis</keyword>
<keyword id="KW-0315">Glutamine amidotransferase</keyword>
<accession>A7N8K5</accession>
<sequence length="475" mass="51326">MVQGTTSDAGKSVLVAGLCRVLARKGIKVAPFKPQNMALNSAVTKDGGEIGRAQAVQAQACNVEPTVHMNPVLIKPNSDTGAQIILQGKALSNMDAVGFHDYKRVAMGTVLDSFAKLTDEYESVMIEGAGSPAEINLRENDIANMGFAEEADVPVIIIADIDRGGVFAHLYGTLALLSESEQARVKGFVINRFRGDIGLLESGLDWLEEKTGKPVLGVLPFLHGLNLEAEDAITAEQELSSQVKLNVVVPVLTRISNHTDFDVLRLNPDINLRYVGKGEKIDKADLVILPGTKSVRDDLDYLRSQGWDKDIQRHIRLGGKVIGICGGYQMLGKLIDDPNGVEGSPGKSEGLGLLDITTTLTDSKQLTNTHAQLCLNGKTANVKGYEIHVGRSEVQGAQPLRLSSGEAEGAISECGQIMGTYLHGFFDEADVLSLVSEWVNGTQIKQQDFEQLKEKGINRIADAIAQHMNLDFLFK</sequence>